<sequence length="28" mass="3150">TRRTAFLFDELSLWHSASQYALILPVGG</sequence>
<keyword id="KW-0903">Direct protein sequencing</keyword>
<keyword id="KW-0378">Hydrolase</keyword>
<name>ARYA_PSEPU</name>
<reference key="1">
    <citation type="journal article" date="1992" name="Eur. J. Biochem.">
        <title>Purification and characterization of a novel enzyme, arylalkyl acylamidase, from Pseudomonas putida Sc2.</title>
        <authorList>
            <person name="Shimizu S."/>
            <person name="Ogawa J."/>
            <person name="Chung M.C.-M."/>
            <person name="Yamada H."/>
        </authorList>
    </citation>
    <scope>PROTEIN SEQUENCE</scope>
    <source>
        <strain>SC2</strain>
    </source>
</reference>
<feature type="chain" id="PRO_0000064687" description="Arylalkyl acylamidase">
    <location>
        <begin position="1"/>
        <end position="28" status="greater than"/>
    </location>
</feature>
<feature type="non-terminal residue">
    <location>
        <position position="28"/>
    </location>
</feature>
<dbReference type="EC" id="3.5.1.76"/>
<dbReference type="PIR" id="S29285">
    <property type="entry name" value="S29285"/>
</dbReference>
<dbReference type="GO" id="GO:0047416">
    <property type="term" value="F:arylalkyl acylamidase activity"/>
    <property type="evidence" value="ECO:0007669"/>
    <property type="project" value="UniProtKB-EC"/>
</dbReference>
<organism>
    <name type="scientific">Pseudomonas putida</name>
    <name type="common">Arthrobacter siderocapsulatus</name>
    <dbReference type="NCBI Taxonomy" id="303"/>
    <lineage>
        <taxon>Bacteria</taxon>
        <taxon>Pseudomonadati</taxon>
        <taxon>Pseudomonadota</taxon>
        <taxon>Gammaproteobacteria</taxon>
        <taxon>Pseudomonadales</taxon>
        <taxon>Pseudomonadaceae</taxon>
        <taxon>Pseudomonas</taxon>
    </lineage>
</organism>
<accession>P35902</accession>
<proteinExistence type="evidence at protein level"/>
<protein>
    <recommendedName>
        <fullName>Arylalkyl acylamidase</fullName>
        <ecNumber>3.5.1.76</ecNumber>
    </recommendedName>
</protein>
<comment type="function">
    <text>Shows a strict specificity for N-acetyl arylalkylamines but not acetanilide derivatives.</text>
</comment>
<comment type="catalytic activity">
    <reaction>
        <text>an N-acetylarylalkylamine + H2O = an aralkylamine + acetate</text>
        <dbReference type="Rhea" id="RHEA:10352"/>
        <dbReference type="ChEBI" id="CHEBI:15377"/>
        <dbReference type="ChEBI" id="CHEBI:18096"/>
        <dbReference type="ChEBI" id="CHEBI:30089"/>
        <dbReference type="ChEBI" id="CHEBI:88332"/>
        <dbReference type="EC" id="3.5.1.76"/>
    </reaction>
</comment>
<comment type="activity regulation">
    <text>Activated by divalent metal ions. Inhibited by certain thiol reagents.</text>
</comment>
<comment type="subunit">
    <text>Homotetramer.</text>
</comment>